<gene>
    <name evidence="1" type="primary">rpmE</name>
    <name type="ordered locus">ETA_01230</name>
</gene>
<evidence type="ECO:0000255" key="1">
    <source>
        <dbReference type="HAMAP-Rule" id="MF_00501"/>
    </source>
</evidence>
<evidence type="ECO:0000305" key="2"/>
<organism>
    <name type="scientific">Erwinia tasmaniensis (strain DSM 17950 / CFBP 7177 / CIP 109463 / NCPPB 4357 / Et1/99)</name>
    <dbReference type="NCBI Taxonomy" id="465817"/>
    <lineage>
        <taxon>Bacteria</taxon>
        <taxon>Pseudomonadati</taxon>
        <taxon>Pseudomonadota</taxon>
        <taxon>Gammaproteobacteria</taxon>
        <taxon>Enterobacterales</taxon>
        <taxon>Erwiniaceae</taxon>
        <taxon>Erwinia</taxon>
    </lineage>
</organism>
<reference key="1">
    <citation type="journal article" date="2008" name="Environ. Microbiol.">
        <title>The genome of Erwinia tasmaniensis strain Et1/99, a non-pathogenic bacterium in the genus Erwinia.</title>
        <authorList>
            <person name="Kube M."/>
            <person name="Migdoll A.M."/>
            <person name="Mueller I."/>
            <person name="Kuhl H."/>
            <person name="Beck A."/>
            <person name="Reinhardt R."/>
            <person name="Geider K."/>
        </authorList>
    </citation>
    <scope>NUCLEOTIDE SEQUENCE [LARGE SCALE GENOMIC DNA]</scope>
    <source>
        <strain>DSM 17950 / CFBP 7177 / CIP 109463 / NCPPB 4357 / Et1/99</strain>
    </source>
</reference>
<proteinExistence type="inferred from homology"/>
<comment type="function">
    <text evidence="1">Binds the 23S rRNA.</text>
</comment>
<comment type="cofactor">
    <cofactor evidence="1">
        <name>Zn(2+)</name>
        <dbReference type="ChEBI" id="CHEBI:29105"/>
    </cofactor>
    <text evidence="1">Binds 1 zinc ion per subunit.</text>
</comment>
<comment type="subunit">
    <text evidence="1">Part of the 50S ribosomal subunit.</text>
</comment>
<comment type="similarity">
    <text evidence="1">Belongs to the bacterial ribosomal protein bL31 family. Type A subfamily.</text>
</comment>
<keyword id="KW-0479">Metal-binding</keyword>
<keyword id="KW-1185">Reference proteome</keyword>
<keyword id="KW-0687">Ribonucleoprotein</keyword>
<keyword id="KW-0689">Ribosomal protein</keyword>
<keyword id="KW-0694">RNA-binding</keyword>
<keyword id="KW-0699">rRNA-binding</keyword>
<keyword id="KW-0862">Zinc</keyword>
<feature type="chain" id="PRO_1000126625" description="Large ribosomal subunit protein bL31">
    <location>
        <begin position="1"/>
        <end position="70"/>
    </location>
</feature>
<feature type="binding site" evidence="1">
    <location>
        <position position="16"/>
    </location>
    <ligand>
        <name>Zn(2+)</name>
        <dbReference type="ChEBI" id="CHEBI:29105"/>
    </ligand>
</feature>
<feature type="binding site" evidence="1">
    <location>
        <position position="18"/>
    </location>
    <ligand>
        <name>Zn(2+)</name>
        <dbReference type="ChEBI" id="CHEBI:29105"/>
    </ligand>
</feature>
<feature type="binding site" evidence="1">
    <location>
        <position position="37"/>
    </location>
    <ligand>
        <name>Zn(2+)</name>
        <dbReference type="ChEBI" id="CHEBI:29105"/>
    </ligand>
</feature>
<feature type="binding site" evidence="1">
    <location>
        <position position="40"/>
    </location>
    <ligand>
        <name>Zn(2+)</name>
        <dbReference type="ChEBI" id="CHEBI:29105"/>
    </ligand>
</feature>
<protein>
    <recommendedName>
        <fullName evidence="1">Large ribosomal subunit protein bL31</fullName>
    </recommendedName>
    <alternativeName>
        <fullName evidence="2">50S ribosomal protein L31</fullName>
    </alternativeName>
</protein>
<name>RL31_ERWT9</name>
<accession>B2VI89</accession>
<sequence>MKKGIHPNYAEVTAKCSCGNEIKTRSTVGHDLNLDVCGNCHPFYTGKQRDVASGGRVDRFNKRFSIPGSK</sequence>
<dbReference type="EMBL" id="CU468135">
    <property type="protein sequence ID" value="CAO95169.1"/>
    <property type="molecule type" value="Genomic_DNA"/>
</dbReference>
<dbReference type="RefSeq" id="WP_012439895.1">
    <property type="nucleotide sequence ID" value="NC_010694.1"/>
</dbReference>
<dbReference type="SMR" id="B2VI89"/>
<dbReference type="STRING" id="465817.ETA_01230"/>
<dbReference type="GeneID" id="92238696"/>
<dbReference type="KEGG" id="eta:ETA_01230"/>
<dbReference type="eggNOG" id="COG0254">
    <property type="taxonomic scope" value="Bacteria"/>
</dbReference>
<dbReference type="HOGENOM" id="CLU_114306_4_3_6"/>
<dbReference type="OrthoDB" id="9803251at2"/>
<dbReference type="Proteomes" id="UP000001726">
    <property type="component" value="Chromosome"/>
</dbReference>
<dbReference type="GO" id="GO:1990904">
    <property type="term" value="C:ribonucleoprotein complex"/>
    <property type="evidence" value="ECO:0007669"/>
    <property type="project" value="UniProtKB-KW"/>
</dbReference>
<dbReference type="GO" id="GO:0005840">
    <property type="term" value="C:ribosome"/>
    <property type="evidence" value="ECO:0007669"/>
    <property type="project" value="UniProtKB-KW"/>
</dbReference>
<dbReference type="GO" id="GO:0046872">
    <property type="term" value="F:metal ion binding"/>
    <property type="evidence" value="ECO:0007669"/>
    <property type="project" value="UniProtKB-KW"/>
</dbReference>
<dbReference type="GO" id="GO:0019843">
    <property type="term" value="F:rRNA binding"/>
    <property type="evidence" value="ECO:0007669"/>
    <property type="project" value="UniProtKB-KW"/>
</dbReference>
<dbReference type="GO" id="GO:0003735">
    <property type="term" value="F:structural constituent of ribosome"/>
    <property type="evidence" value="ECO:0007669"/>
    <property type="project" value="InterPro"/>
</dbReference>
<dbReference type="GO" id="GO:0006412">
    <property type="term" value="P:translation"/>
    <property type="evidence" value="ECO:0007669"/>
    <property type="project" value="UniProtKB-UniRule"/>
</dbReference>
<dbReference type="FunFam" id="4.10.830.30:FF:000001">
    <property type="entry name" value="50S ribosomal protein L31"/>
    <property type="match status" value="1"/>
</dbReference>
<dbReference type="Gene3D" id="4.10.830.30">
    <property type="entry name" value="Ribosomal protein L31"/>
    <property type="match status" value="1"/>
</dbReference>
<dbReference type="HAMAP" id="MF_00501">
    <property type="entry name" value="Ribosomal_bL31_1"/>
    <property type="match status" value="1"/>
</dbReference>
<dbReference type="InterPro" id="IPR034704">
    <property type="entry name" value="Ribosomal_bL28/bL31-like_sf"/>
</dbReference>
<dbReference type="InterPro" id="IPR002150">
    <property type="entry name" value="Ribosomal_bL31"/>
</dbReference>
<dbReference type="InterPro" id="IPR027491">
    <property type="entry name" value="Ribosomal_bL31_A"/>
</dbReference>
<dbReference type="InterPro" id="IPR042105">
    <property type="entry name" value="Ribosomal_bL31_sf"/>
</dbReference>
<dbReference type="NCBIfam" id="TIGR00105">
    <property type="entry name" value="L31"/>
    <property type="match status" value="1"/>
</dbReference>
<dbReference type="NCBIfam" id="NF000612">
    <property type="entry name" value="PRK00019.1"/>
    <property type="match status" value="1"/>
</dbReference>
<dbReference type="PANTHER" id="PTHR33280">
    <property type="entry name" value="50S RIBOSOMAL PROTEIN L31, CHLOROPLASTIC"/>
    <property type="match status" value="1"/>
</dbReference>
<dbReference type="PANTHER" id="PTHR33280:SF6">
    <property type="entry name" value="LARGE RIBOSOMAL SUBUNIT PROTEIN BL31A"/>
    <property type="match status" value="1"/>
</dbReference>
<dbReference type="Pfam" id="PF01197">
    <property type="entry name" value="Ribosomal_L31"/>
    <property type="match status" value="1"/>
</dbReference>
<dbReference type="PRINTS" id="PR01249">
    <property type="entry name" value="RIBOSOMALL31"/>
</dbReference>
<dbReference type="SUPFAM" id="SSF143800">
    <property type="entry name" value="L28p-like"/>
    <property type="match status" value="1"/>
</dbReference>
<dbReference type="PROSITE" id="PS01143">
    <property type="entry name" value="RIBOSOMAL_L31"/>
    <property type="match status" value="1"/>
</dbReference>